<protein>
    <recommendedName>
        <fullName evidence="1">Translation initiation factor 1A</fullName>
        <shortName evidence="1">aIF-1A</shortName>
    </recommendedName>
</protein>
<proteinExistence type="inferred from homology"/>
<sequence length="111" mass="13133">MKKSNNKNNHKNNHNNNQGGENIRVRSPRRGEIPGVVEQILGHGKLKVRCNDKQIRLCRIPGKMKKRIWIREGDVVLVKPWDFQSDEKADVIWRYTRTEANYLERRGFLKI</sequence>
<comment type="function">
    <text evidence="1">Seems to be required for maximal rate of protein biosynthesis. Enhances ribosome dissociation into subunits and stabilizes the binding of the initiator Met-tRNA(I) to 40 S ribosomal subunits.</text>
</comment>
<comment type="similarity">
    <text evidence="1">Belongs to the eIF-1A family.</text>
</comment>
<keyword id="KW-0396">Initiation factor</keyword>
<keyword id="KW-0648">Protein biosynthesis</keyword>
<keyword id="KW-1185">Reference proteome</keyword>
<gene>
    <name evidence="1" type="primary">eif1a</name>
    <name type="ordered locus">Msp_1335</name>
</gene>
<dbReference type="EMBL" id="CP000102">
    <property type="protein sequence ID" value="ABC57712.1"/>
    <property type="molecule type" value="Genomic_DNA"/>
</dbReference>
<dbReference type="SMR" id="Q2NEP1"/>
<dbReference type="STRING" id="339860.Msp_1335"/>
<dbReference type="KEGG" id="mst:Msp_1335"/>
<dbReference type="eggNOG" id="arCOG01179">
    <property type="taxonomic scope" value="Archaea"/>
</dbReference>
<dbReference type="HOGENOM" id="CLU_109098_1_2_2"/>
<dbReference type="OrthoDB" id="2586at2157"/>
<dbReference type="Proteomes" id="UP000001931">
    <property type="component" value="Chromosome"/>
</dbReference>
<dbReference type="GO" id="GO:0003723">
    <property type="term" value="F:RNA binding"/>
    <property type="evidence" value="ECO:0007669"/>
    <property type="project" value="InterPro"/>
</dbReference>
<dbReference type="GO" id="GO:0003743">
    <property type="term" value="F:translation initiation factor activity"/>
    <property type="evidence" value="ECO:0007669"/>
    <property type="project" value="UniProtKB-UniRule"/>
</dbReference>
<dbReference type="CDD" id="cd05793">
    <property type="entry name" value="S1_IF1A"/>
    <property type="match status" value="1"/>
</dbReference>
<dbReference type="Gene3D" id="2.40.50.140">
    <property type="entry name" value="Nucleic acid-binding proteins"/>
    <property type="match status" value="1"/>
</dbReference>
<dbReference type="HAMAP" id="MF_00216">
    <property type="entry name" value="aIF_1A"/>
    <property type="match status" value="1"/>
</dbReference>
<dbReference type="InterPro" id="IPR012340">
    <property type="entry name" value="NA-bd_OB-fold"/>
</dbReference>
<dbReference type="InterPro" id="IPR006196">
    <property type="entry name" value="RNA-binding_domain_S1_IF1"/>
</dbReference>
<dbReference type="InterPro" id="IPR001253">
    <property type="entry name" value="TIF_eIF-1A"/>
</dbReference>
<dbReference type="NCBIfam" id="TIGR00523">
    <property type="entry name" value="eIF-1A"/>
    <property type="match status" value="1"/>
</dbReference>
<dbReference type="NCBIfam" id="NF003084">
    <property type="entry name" value="PRK04012.1-3"/>
    <property type="match status" value="1"/>
</dbReference>
<dbReference type="NCBIfam" id="NF003085">
    <property type="entry name" value="PRK04012.1-5"/>
    <property type="match status" value="1"/>
</dbReference>
<dbReference type="PANTHER" id="PTHR21668">
    <property type="entry name" value="EIF-1A"/>
    <property type="match status" value="1"/>
</dbReference>
<dbReference type="Pfam" id="PF01176">
    <property type="entry name" value="eIF-1a"/>
    <property type="match status" value="1"/>
</dbReference>
<dbReference type="SMART" id="SM00652">
    <property type="entry name" value="eIF1a"/>
    <property type="match status" value="1"/>
</dbReference>
<dbReference type="SUPFAM" id="SSF50249">
    <property type="entry name" value="Nucleic acid-binding proteins"/>
    <property type="match status" value="1"/>
</dbReference>
<dbReference type="PROSITE" id="PS50832">
    <property type="entry name" value="S1_IF1_TYPE"/>
    <property type="match status" value="1"/>
</dbReference>
<reference key="1">
    <citation type="journal article" date="2006" name="J. Bacteriol.">
        <title>The genome sequence of Methanosphaera stadtmanae reveals why this human intestinal archaeon is restricted to methanol and H2 for methane formation and ATP synthesis.</title>
        <authorList>
            <person name="Fricke W.F."/>
            <person name="Seedorf H."/>
            <person name="Henne A."/>
            <person name="Kruer M."/>
            <person name="Liesegang H."/>
            <person name="Hedderich R."/>
            <person name="Gottschalk G."/>
            <person name="Thauer R.K."/>
        </authorList>
    </citation>
    <scope>NUCLEOTIDE SEQUENCE [LARGE SCALE GENOMIC DNA]</scope>
    <source>
        <strain>ATCC 43021 / DSM 3091 / JCM 11832 / MCB-3</strain>
    </source>
</reference>
<accession>Q2NEP1</accession>
<name>IF1A_METST</name>
<evidence type="ECO:0000255" key="1">
    <source>
        <dbReference type="HAMAP-Rule" id="MF_00216"/>
    </source>
</evidence>
<evidence type="ECO:0000256" key="2">
    <source>
        <dbReference type="SAM" id="MobiDB-lite"/>
    </source>
</evidence>
<organism>
    <name type="scientific">Methanosphaera stadtmanae (strain ATCC 43021 / DSM 3091 / JCM 11832 / MCB-3)</name>
    <dbReference type="NCBI Taxonomy" id="339860"/>
    <lineage>
        <taxon>Archaea</taxon>
        <taxon>Methanobacteriati</taxon>
        <taxon>Methanobacteriota</taxon>
        <taxon>Methanomada group</taxon>
        <taxon>Methanobacteria</taxon>
        <taxon>Methanobacteriales</taxon>
        <taxon>Methanobacteriaceae</taxon>
        <taxon>Methanosphaera</taxon>
    </lineage>
</organism>
<feature type="chain" id="PRO_0000259369" description="Translation initiation factor 1A">
    <location>
        <begin position="1"/>
        <end position="111"/>
    </location>
</feature>
<feature type="domain" description="S1-like" evidence="1">
    <location>
        <begin position="23"/>
        <end position="96"/>
    </location>
</feature>
<feature type="region of interest" description="Disordered" evidence="2">
    <location>
        <begin position="1"/>
        <end position="30"/>
    </location>
</feature>
<feature type="compositionally biased region" description="Basic residues" evidence="2">
    <location>
        <begin position="1"/>
        <end position="13"/>
    </location>
</feature>